<feature type="chain" id="PRO_1000118743" description="Translation initiation factor IF-2">
    <location>
        <begin position="1"/>
        <end position="926"/>
    </location>
</feature>
<feature type="domain" description="tr-type G">
    <location>
        <begin position="424"/>
        <end position="591"/>
    </location>
</feature>
<feature type="region of interest" description="Disordered" evidence="3">
    <location>
        <begin position="1"/>
        <end position="185"/>
    </location>
</feature>
<feature type="region of interest" description="Disordered" evidence="3">
    <location>
        <begin position="200"/>
        <end position="299"/>
    </location>
</feature>
<feature type="region of interest" description="G1" evidence="1">
    <location>
        <begin position="433"/>
        <end position="440"/>
    </location>
</feature>
<feature type="region of interest" description="G2" evidence="1">
    <location>
        <begin position="458"/>
        <end position="462"/>
    </location>
</feature>
<feature type="region of interest" description="G3" evidence="1">
    <location>
        <begin position="479"/>
        <end position="482"/>
    </location>
</feature>
<feature type="region of interest" description="G4" evidence="1">
    <location>
        <begin position="533"/>
        <end position="536"/>
    </location>
</feature>
<feature type="region of interest" description="G5" evidence="1">
    <location>
        <begin position="569"/>
        <end position="571"/>
    </location>
</feature>
<feature type="compositionally biased region" description="Low complexity" evidence="3">
    <location>
        <begin position="13"/>
        <end position="24"/>
    </location>
</feature>
<feature type="compositionally biased region" description="Low complexity" evidence="3">
    <location>
        <begin position="70"/>
        <end position="96"/>
    </location>
</feature>
<feature type="compositionally biased region" description="Polar residues" evidence="3">
    <location>
        <begin position="110"/>
        <end position="133"/>
    </location>
</feature>
<feature type="compositionally biased region" description="Basic and acidic residues" evidence="3">
    <location>
        <begin position="151"/>
        <end position="185"/>
    </location>
</feature>
<feature type="compositionally biased region" description="Low complexity" evidence="3">
    <location>
        <begin position="211"/>
        <end position="251"/>
    </location>
</feature>
<feature type="binding site" evidence="2">
    <location>
        <begin position="433"/>
        <end position="440"/>
    </location>
    <ligand>
        <name>GTP</name>
        <dbReference type="ChEBI" id="CHEBI:37565"/>
    </ligand>
</feature>
<feature type="binding site" evidence="2">
    <location>
        <begin position="479"/>
        <end position="483"/>
    </location>
    <ligand>
        <name>GTP</name>
        <dbReference type="ChEBI" id="CHEBI:37565"/>
    </ligand>
</feature>
<feature type="binding site" evidence="2">
    <location>
        <begin position="533"/>
        <end position="536"/>
    </location>
    <ligand>
        <name>GTP</name>
        <dbReference type="ChEBI" id="CHEBI:37565"/>
    </ligand>
</feature>
<keyword id="KW-0963">Cytoplasm</keyword>
<keyword id="KW-0342">GTP-binding</keyword>
<keyword id="KW-0396">Initiation factor</keyword>
<keyword id="KW-0547">Nucleotide-binding</keyword>
<keyword id="KW-0648">Protein biosynthesis</keyword>
<keyword id="KW-1185">Reference proteome</keyword>
<comment type="function">
    <text evidence="2">One of the essential components for the initiation of protein synthesis. Protects formylmethionyl-tRNA from spontaneous hydrolysis and promotes its binding to the 30S ribosomal subunits. Also involved in the hydrolysis of GTP during the formation of the 70S ribosomal complex.</text>
</comment>
<comment type="subcellular location">
    <subcellularLocation>
        <location evidence="2">Cytoplasm</location>
    </subcellularLocation>
</comment>
<comment type="similarity">
    <text evidence="2">Belongs to the TRAFAC class translation factor GTPase superfamily. Classic translation factor GTPase family. IF-2 subfamily.</text>
</comment>
<proteinExistence type="inferred from homology"/>
<sequence>MTDSKDDKTLSVTGKKTLTLKPTGVNQGTVRQDMGRGRTKAVVVETRKRRPTRPEDERAGQPQGRVGDDAPATAAAAPVQTPAPVQAPAPVAAAPQAPRPAAPAQRVQQTNQYSQQRHPGQQNRPQASSQPSRQPDRPRGAVLHDLSASEMDARRRALAEAQVREVEDAKRRAEEEVRRQAEEVERQRLAALEAIRQAEEDKARALEAKNAPEPVAEPVAPVAETPRAADPAPRAPSPAGAKPAAGAPAPSFVRGRKPEGEDDENRGPARGGPVRGKVVRPEPAKVPARPKTEDERRRGKLTVTTAAVDEDGNARGRSLSAMRRRQEKFRRSQMQEPREKVMREVVLPETITIQELSQRMSERAVDVIKYLMKEGQMMKPGDVIDADLAELIATEFGHTVKRVSESDVEEGIFDVKDDAGEMVSRPPVVTIMGHVDHGKTSLLDAIRQTSVVSGEAGGITQHIGAYQVEQNGHKITFIDTPGHAAFTAMRARGAQATDIAILVVAADDSVMPQTIESIHHAKAANVPIIVAINKIDKHEANPEKVRQQLLQHEVFVESMGGEVLDVEVSAKNKLNLDKLLEAVLLQAEILDLKADPSRTAEGLVIEAQLDRGRGSVATVLVQKGTLRPGQIIVAGDQWGRVRALVNDKGGHVKEAGPAMPVEVLGLSGTPAAGDKFAVVESEARAREISEYRQRLARDKAAARQSGQRGSLEQMMSKLQDTGFKEFPLVIKADVQGSVEAIVAALDKLGTDEVRARIVHSGAGAITESDISLAEASNAAIIGFNVRANVQARAASERTGTEIRYYNIIYDLVDDVKAAMSGLLSPERRETFLGNAEILEVFNITKTGKVAGCRVVEGKVERGAGVRLVRDNVVIHEGKLKTLKRFKDEVADVPMGQECGMAFENYEDIRAGDTIECFRVEHITRTL</sequence>
<organism>
    <name type="scientific">Allorhizobium ampelinum (strain ATCC BAA-846 / DSM 112012 / S4)</name>
    <name type="common">Agrobacterium vitis (strain S4)</name>
    <dbReference type="NCBI Taxonomy" id="311402"/>
    <lineage>
        <taxon>Bacteria</taxon>
        <taxon>Pseudomonadati</taxon>
        <taxon>Pseudomonadota</taxon>
        <taxon>Alphaproteobacteria</taxon>
        <taxon>Hyphomicrobiales</taxon>
        <taxon>Rhizobiaceae</taxon>
        <taxon>Rhizobium/Agrobacterium group</taxon>
        <taxon>Allorhizobium</taxon>
        <taxon>Allorhizobium ampelinum</taxon>
    </lineage>
</organism>
<evidence type="ECO:0000250" key="1"/>
<evidence type="ECO:0000255" key="2">
    <source>
        <dbReference type="HAMAP-Rule" id="MF_00100"/>
    </source>
</evidence>
<evidence type="ECO:0000256" key="3">
    <source>
        <dbReference type="SAM" id="MobiDB-lite"/>
    </source>
</evidence>
<gene>
    <name evidence="2" type="primary">infB</name>
    <name type="ordered locus">Avi_0169</name>
</gene>
<reference key="1">
    <citation type="journal article" date="2009" name="J. Bacteriol.">
        <title>Genome sequences of three Agrobacterium biovars help elucidate the evolution of multichromosome genomes in bacteria.</title>
        <authorList>
            <person name="Slater S.C."/>
            <person name="Goldman B.S."/>
            <person name="Goodner B."/>
            <person name="Setubal J.C."/>
            <person name="Farrand S.K."/>
            <person name="Nester E.W."/>
            <person name="Burr T.J."/>
            <person name="Banta L."/>
            <person name="Dickerman A.W."/>
            <person name="Paulsen I."/>
            <person name="Otten L."/>
            <person name="Suen G."/>
            <person name="Welch R."/>
            <person name="Almeida N.F."/>
            <person name="Arnold F."/>
            <person name="Burton O.T."/>
            <person name="Du Z."/>
            <person name="Ewing A."/>
            <person name="Godsy E."/>
            <person name="Heisel S."/>
            <person name="Houmiel K.L."/>
            <person name="Jhaveri J."/>
            <person name="Lu J."/>
            <person name="Miller N.M."/>
            <person name="Norton S."/>
            <person name="Chen Q."/>
            <person name="Phoolcharoen W."/>
            <person name="Ohlin V."/>
            <person name="Ondrusek D."/>
            <person name="Pride N."/>
            <person name="Stricklin S.L."/>
            <person name="Sun J."/>
            <person name="Wheeler C."/>
            <person name="Wilson L."/>
            <person name="Zhu H."/>
            <person name="Wood D.W."/>
        </authorList>
    </citation>
    <scope>NUCLEOTIDE SEQUENCE [LARGE SCALE GENOMIC DNA]</scope>
    <source>
        <strain>ATCC BAA-846 / DSM 112012 / S4</strain>
    </source>
</reference>
<name>IF2_ALLAM</name>
<accession>B9JYK6</accession>
<dbReference type="EMBL" id="CP000633">
    <property type="protein sequence ID" value="ACM35102.1"/>
    <property type="molecule type" value="Genomic_DNA"/>
</dbReference>
<dbReference type="RefSeq" id="WP_012654632.1">
    <property type="nucleotide sequence ID" value="NC_011989.1"/>
</dbReference>
<dbReference type="SMR" id="B9JYK6"/>
<dbReference type="STRING" id="311402.Avi_0169"/>
<dbReference type="KEGG" id="avi:Avi_0169"/>
<dbReference type="eggNOG" id="COG0532">
    <property type="taxonomic scope" value="Bacteria"/>
</dbReference>
<dbReference type="HOGENOM" id="CLU_006301_10_0_5"/>
<dbReference type="Proteomes" id="UP000001596">
    <property type="component" value="Chromosome 1"/>
</dbReference>
<dbReference type="GO" id="GO:0005829">
    <property type="term" value="C:cytosol"/>
    <property type="evidence" value="ECO:0007669"/>
    <property type="project" value="TreeGrafter"/>
</dbReference>
<dbReference type="GO" id="GO:0005525">
    <property type="term" value="F:GTP binding"/>
    <property type="evidence" value="ECO:0007669"/>
    <property type="project" value="UniProtKB-KW"/>
</dbReference>
<dbReference type="GO" id="GO:0003924">
    <property type="term" value="F:GTPase activity"/>
    <property type="evidence" value="ECO:0007669"/>
    <property type="project" value="UniProtKB-UniRule"/>
</dbReference>
<dbReference type="GO" id="GO:0097216">
    <property type="term" value="F:guanosine tetraphosphate binding"/>
    <property type="evidence" value="ECO:0007669"/>
    <property type="project" value="UniProtKB-ARBA"/>
</dbReference>
<dbReference type="GO" id="GO:0003743">
    <property type="term" value="F:translation initiation factor activity"/>
    <property type="evidence" value="ECO:0007669"/>
    <property type="project" value="UniProtKB-UniRule"/>
</dbReference>
<dbReference type="CDD" id="cd01887">
    <property type="entry name" value="IF2_eIF5B"/>
    <property type="match status" value="1"/>
</dbReference>
<dbReference type="CDD" id="cd03702">
    <property type="entry name" value="IF2_mtIF2_II"/>
    <property type="match status" value="1"/>
</dbReference>
<dbReference type="CDD" id="cd03692">
    <property type="entry name" value="mtIF2_IVc"/>
    <property type="match status" value="1"/>
</dbReference>
<dbReference type="FunFam" id="2.40.30.10:FF:000007">
    <property type="entry name" value="Translation initiation factor IF-2"/>
    <property type="match status" value="1"/>
</dbReference>
<dbReference type="FunFam" id="2.40.30.10:FF:000008">
    <property type="entry name" value="Translation initiation factor IF-2"/>
    <property type="match status" value="1"/>
</dbReference>
<dbReference type="FunFam" id="3.40.50.10050:FF:000001">
    <property type="entry name" value="Translation initiation factor IF-2"/>
    <property type="match status" value="1"/>
</dbReference>
<dbReference type="FunFam" id="3.40.50.300:FF:000019">
    <property type="entry name" value="Translation initiation factor IF-2"/>
    <property type="match status" value="1"/>
</dbReference>
<dbReference type="Gene3D" id="3.40.50.300">
    <property type="entry name" value="P-loop containing nucleotide triphosphate hydrolases"/>
    <property type="match status" value="1"/>
</dbReference>
<dbReference type="Gene3D" id="2.40.30.10">
    <property type="entry name" value="Translation factors"/>
    <property type="match status" value="2"/>
</dbReference>
<dbReference type="Gene3D" id="3.40.50.10050">
    <property type="entry name" value="Translation initiation factor IF- 2, domain 3"/>
    <property type="match status" value="1"/>
</dbReference>
<dbReference type="HAMAP" id="MF_00100_B">
    <property type="entry name" value="IF_2_B"/>
    <property type="match status" value="1"/>
</dbReference>
<dbReference type="InterPro" id="IPR053905">
    <property type="entry name" value="EF-G-like_DII"/>
</dbReference>
<dbReference type="InterPro" id="IPR004161">
    <property type="entry name" value="EFTu-like_2"/>
</dbReference>
<dbReference type="InterPro" id="IPR013575">
    <property type="entry name" value="IF2_assoc_dom_bac"/>
</dbReference>
<dbReference type="InterPro" id="IPR044145">
    <property type="entry name" value="IF2_II"/>
</dbReference>
<dbReference type="InterPro" id="IPR006847">
    <property type="entry name" value="IF2_N"/>
</dbReference>
<dbReference type="InterPro" id="IPR027417">
    <property type="entry name" value="P-loop_NTPase"/>
</dbReference>
<dbReference type="InterPro" id="IPR005225">
    <property type="entry name" value="Small_GTP-bd"/>
</dbReference>
<dbReference type="InterPro" id="IPR000795">
    <property type="entry name" value="T_Tr_GTP-bd_dom"/>
</dbReference>
<dbReference type="InterPro" id="IPR000178">
    <property type="entry name" value="TF_IF2_bacterial-like"/>
</dbReference>
<dbReference type="InterPro" id="IPR015760">
    <property type="entry name" value="TIF_IF2"/>
</dbReference>
<dbReference type="InterPro" id="IPR023115">
    <property type="entry name" value="TIF_IF2_dom3"/>
</dbReference>
<dbReference type="InterPro" id="IPR036925">
    <property type="entry name" value="TIF_IF2_dom3_sf"/>
</dbReference>
<dbReference type="InterPro" id="IPR009000">
    <property type="entry name" value="Transl_B-barrel_sf"/>
</dbReference>
<dbReference type="NCBIfam" id="TIGR00487">
    <property type="entry name" value="IF-2"/>
    <property type="match status" value="1"/>
</dbReference>
<dbReference type="NCBIfam" id="TIGR00231">
    <property type="entry name" value="small_GTP"/>
    <property type="match status" value="1"/>
</dbReference>
<dbReference type="PANTHER" id="PTHR43381:SF5">
    <property type="entry name" value="TR-TYPE G DOMAIN-CONTAINING PROTEIN"/>
    <property type="match status" value="1"/>
</dbReference>
<dbReference type="PANTHER" id="PTHR43381">
    <property type="entry name" value="TRANSLATION INITIATION FACTOR IF-2-RELATED"/>
    <property type="match status" value="1"/>
</dbReference>
<dbReference type="Pfam" id="PF22042">
    <property type="entry name" value="EF-G_D2"/>
    <property type="match status" value="1"/>
</dbReference>
<dbReference type="Pfam" id="PF00009">
    <property type="entry name" value="GTP_EFTU"/>
    <property type="match status" value="1"/>
</dbReference>
<dbReference type="Pfam" id="PF03144">
    <property type="entry name" value="GTP_EFTU_D2"/>
    <property type="match status" value="1"/>
</dbReference>
<dbReference type="Pfam" id="PF11987">
    <property type="entry name" value="IF-2"/>
    <property type="match status" value="1"/>
</dbReference>
<dbReference type="Pfam" id="PF08364">
    <property type="entry name" value="IF2_assoc"/>
    <property type="match status" value="1"/>
</dbReference>
<dbReference type="Pfam" id="PF04760">
    <property type="entry name" value="IF2_N"/>
    <property type="match status" value="1"/>
</dbReference>
<dbReference type="SUPFAM" id="SSF52156">
    <property type="entry name" value="Initiation factor IF2/eIF5b, domain 3"/>
    <property type="match status" value="1"/>
</dbReference>
<dbReference type="SUPFAM" id="SSF52540">
    <property type="entry name" value="P-loop containing nucleoside triphosphate hydrolases"/>
    <property type="match status" value="1"/>
</dbReference>
<dbReference type="SUPFAM" id="SSF50447">
    <property type="entry name" value="Translation proteins"/>
    <property type="match status" value="2"/>
</dbReference>
<dbReference type="PROSITE" id="PS51722">
    <property type="entry name" value="G_TR_2"/>
    <property type="match status" value="1"/>
</dbReference>
<dbReference type="PROSITE" id="PS01176">
    <property type="entry name" value="IF2"/>
    <property type="match status" value="1"/>
</dbReference>
<protein>
    <recommendedName>
        <fullName evidence="2">Translation initiation factor IF-2</fullName>
    </recommendedName>
</protein>